<sequence>MASQKKQLFKIIILGDSGVGKTSLMNQYVNARFTQQYRATVGADFMAKEVMIDDRMVTLQIWDTAGQERFQSLGGAFYRGADCCVLVYDITNPKSFDSLDSWRDEFLMQGQPKDPEHFPFVVLGNKLDKATERKVQESKAQQWCKSHGNIQFFEVSAKDATNIEQAFQDIAKAAASQEKDEEIFFPTTVTLTKQSQKPQAKQGGCC</sequence>
<keyword id="KW-0072">Autophagy</keyword>
<keyword id="KW-0968">Cytoplasmic vesicle</keyword>
<keyword id="KW-0967">Endosome</keyword>
<keyword id="KW-0342">GTP-binding</keyword>
<keyword id="KW-0378">Hydrolase</keyword>
<keyword id="KW-0442">Lipid degradation</keyword>
<keyword id="KW-0551">Lipid droplet</keyword>
<keyword id="KW-0443">Lipid metabolism</keyword>
<keyword id="KW-0449">Lipoprotein</keyword>
<keyword id="KW-0458">Lysosome</keyword>
<keyword id="KW-0472">Membrane</keyword>
<keyword id="KW-0547">Nucleotide-binding</keyword>
<keyword id="KW-0597">Phosphoprotein</keyword>
<keyword id="KW-0636">Prenylation</keyword>
<reference key="1">
    <citation type="journal article" date="2003" name="Biol. Cell">
        <title>Evolutionary conservancy of the endocytic and trafficking machinery in the unicellular eukaryote Paramecium.</title>
        <authorList>
            <person name="Surmacz L."/>
            <person name="Wiejak J."/>
            <person name="Wyroba E."/>
        </authorList>
    </citation>
    <scope>NUCLEOTIDE SEQUENCE [GENOMIC DNA]</scope>
    <scope>SUBCELLULAR LOCATION</scope>
    <source>
        <strain evidence="11">299s</strain>
    </source>
</reference>
<reference key="2">
    <citation type="journal article" date="2006" name="Acta Biochim. Pol.">
        <title>Cloning of two genes encoding Rab7 in Paramecium.</title>
        <authorList>
            <person name="Surmacz L."/>
            <person name="Wiejak J."/>
            <person name="Wyroba E."/>
        </authorList>
    </citation>
    <scope>NUCLEOTIDE SEQUENCE [MRNA]</scope>
    <source>
        <strain evidence="12">299s</strain>
    </source>
</reference>
<reference key="3">
    <citation type="submission" date="2008-10" db="EMBL/GenBank/DDBJ databases">
        <authorList>
            <person name="Osinska M."/>
            <person name="Wypych E."/>
            <person name="Wiejak J."/>
            <person name="Wyroba E."/>
        </authorList>
    </citation>
    <scope>NUCLEOTIDE SEQUENCE [GENOMIC DNA]</scope>
    <source>
        <strain evidence="13">299s</strain>
    </source>
</reference>
<reference key="4">
    <citation type="journal article" date="2011" name="Acta Biochim. Pol.">
        <title>Distinct expression, localization and function of two Rab7 proteins encoded by paralogous genes in a free-living model eukaryote.</title>
        <authorList>
            <person name="Osinska M."/>
            <person name="Wiejak J."/>
            <person name="Wypych E."/>
            <person name="Bilski H."/>
            <person name="Bartosiewicz R."/>
            <person name="Wyroba E."/>
        </authorList>
    </citation>
    <scope>IDENTIFICATION BY MASS SPECTROMETRY</scope>
    <scope>FUNCTION</scope>
    <scope>SUBCELLULAR LOCATION</scope>
    <scope>INDUCTION</scope>
    <scope>PHOSPHORYLATION AT SER-17; SER-23; THR-34; THR-40; THR-64; SER-72; TYR-78 AND TYR-88</scope>
    <source>
        <strain evidence="8">299s</strain>
    </source>
</reference>
<name>RAB7A_PAROT</name>
<comment type="function">
    <text evidence="2 3 8">Small GTPase which cycles between active GTP-bound and inactive GDP-bound states. In its active state, binds to a variety of effector proteins playing a key role in the regulation of endo-lysosomal trafficking. Governs early-to-late endosomal maturation, microtubule minus-end as well as plus-end directed endosomal migration and positioning, and endosome-lysosome transport through different protein-protein interaction cascades (By similarity). Involved in lipophagy, a cytosolic lipase-independent autophagic pathway (By similarity). Plays a role in phagocyte formation and acidification (PubMed:22030555).</text>
</comment>
<comment type="catalytic activity">
    <reaction evidence="2">
        <text>GTP + H2O = GDP + phosphate + H(+)</text>
        <dbReference type="Rhea" id="RHEA:19669"/>
        <dbReference type="ChEBI" id="CHEBI:15377"/>
        <dbReference type="ChEBI" id="CHEBI:15378"/>
        <dbReference type="ChEBI" id="CHEBI:37565"/>
        <dbReference type="ChEBI" id="CHEBI:43474"/>
        <dbReference type="ChEBI" id="CHEBI:58189"/>
        <dbReference type="EC" id="3.6.5.2"/>
    </reaction>
    <physiologicalReaction direction="left-to-right" evidence="2">
        <dbReference type="Rhea" id="RHEA:19670"/>
    </physiologicalReaction>
</comment>
<comment type="subcellular location">
    <subcellularLocation>
        <location evidence="7 8">Cytoplasmic vesicle</location>
        <location evidence="7 8">Phagosome membrane</location>
        <topology evidence="7 8">Peripheral membrane protein</topology>
        <orientation evidence="10">Cytoplasmic side</orientation>
    </subcellularLocation>
    <subcellularLocation>
        <location evidence="2">Late endosome membrane</location>
        <topology evidence="10">Peripheral membrane protein</topology>
        <orientation evidence="10">Cytoplasmic side</orientation>
    </subcellularLocation>
    <subcellularLocation>
        <location evidence="2">Lysosome membrane</location>
        <topology evidence="10">Peripheral membrane protein</topology>
        <orientation evidence="10">Cytoplasmic side</orientation>
    </subcellularLocation>
    <subcellularLocation>
        <location evidence="2">Cytoplasmic vesicle</location>
        <location evidence="2">Autophagosome membrane</location>
        <topology evidence="10">Peripheral membrane protein</topology>
        <orientation evidence="10">Cytoplasmic side</orientation>
    </subcellularLocation>
    <subcellularLocation>
        <location evidence="3">Lipid droplet</location>
    </subcellularLocation>
    <subcellularLocation>
        <location evidence="3">Cytoplasmic vesicle</location>
    </subcellularLocation>
</comment>
<comment type="induction">
    <text evidence="8">Expression increases two-fold during phagocytosis (at protein level).</text>
</comment>
<comment type="similarity">
    <text evidence="6">Belongs to the small GTPase superfamily. Rab family.</text>
</comment>
<comment type="caution">
    <text evidence="10">Phosphorylation has been demonstrated on peptides which are common to both Rab7a and Rab7b.</text>
</comment>
<proteinExistence type="evidence at protein level"/>
<feature type="chain" id="PRO_0000421471" description="Ras-related protein Rab-7a">
    <location>
        <begin position="1"/>
        <end position="206"/>
    </location>
</feature>
<feature type="short sequence motif" description="Effector region" evidence="6">
    <location>
        <begin position="37"/>
        <end position="45"/>
    </location>
</feature>
<feature type="binding site" evidence="5">
    <location>
        <begin position="15"/>
        <end position="22"/>
    </location>
    <ligand>
        <name>GTP</name>
        <dbReference type="ChEBI" id="CHEBI:37565"/>
    </ligand>
</feature>
<feature type="binding site" evidence="1">
    <location>
        <begin position="34"/>
        <end position="40"/>
    </location>
    <ligand>
        <name>GTP</name>
        <dbReference type="ChEBI" id="CHEBI:37565"/>
    </ligand>
</feature>
<feature type="binding site" evidence="5">
    <location>
        <begin position="63"/>
        <end position="67"/>
    </location>
    <ligand>
        <name>GTP</name>
        <dbReference type="ChEBI" id="CHEBI:37565"/>
    </ligand>
</feature>
<feature type="binding site" evidence="5">
    <location>
        <begin position="125"/>
        <end position="128"/>
    </location>
    <ligand>
        <name>GTP</name>
        <dbReference type="ChEBI" id="CHEBI:37565"/>
    </ligand>
</feature>
<feature type="binding site" evidence="1">
    <location>
        <begin position="157"/>
        <end position="158"/>
    </location>
    <ligand>
        <name>GTP</name>
        <dbReference type="ChEBI" id="CHEBI:37565"/>
    </ligand>
</feature>
<feature type="modified residue" description="Phosphoserine" evidence="8">
    <location>
        <position position="17"/>
    </location>
</feature>
<feature type="modified residue" description="Phosphoserine" evidence="8">
    <location>
        <position position="23"/>
    </location>
</feature>
<feature type="modified residue" description="Phosphothreonine" evidence="8">
    <location>
        <position position="34"/>
    </location>
</feature>
<feature type="modified residue" description="Phosphothreonine" evidence="8">
    <location>
        <position position="40"/>
    </location>
</feature>
<feature type="modified residue" description="Phosphothreonine" evidence="8">
    <location>
        <position position="64"/>
    </location>
</feature>
<feature type="modified residue" description="Phosphoserine" evidence="8">
    <location>
        <position position="72"/>
    </location>
</feature>
<feature type="modified residue" description="Phosphotyrosine" evidence="8">
    <location>
        <position position="78"/>
    </location>
</feature>
<feature type="modified residue" description="Phosphotyrosine" evidence="8">
    <location>
        <position position="88"/>
    </location>
</feature>
<feature type="lipid moiety-binding region" description="S-geranylgeranyl cysteine" evidence="4">
    <location>
        <position position="205"/>
    </location>
</feature>
<feature type="lipid moiety-binding region" description="S-geranylgeranyl cysteine" evidence="4">
    <location>
        <position position="206"/>
    </location>
</feature>
<evidence type="ECO:0000250" key="1"/>
<evidence type="ECO:0000250" key="2">
    <source>
        <dbReference type="UniProtKB" id="P51149"/>
    </source>
</evidence>
<evidence type="ECO:0000250" key="3">
    <source>
        <dbReference type="UniProtKB" id="P51150"/>
    </source>
</evidence>
<evidence type="ECO:0000250" key="4">
    <source>
        <dbReference type="UniProtKB" id="P62822"/>
    </source>
</evidence>
<evidence type="ECO:0000250" key="5">
    <source>
        <dbReference type="UniProtKB" id="Q9NRW1"/>
    </source>
</evidence>
<evidence type="ECO:0000255" key="6"/>
<evidence type="ECO:0000269" key="7">
    <source>
    </source>
</evidence>
<evidence type="ECO:0000269" key="8">
    <source>
    </source>
</evidence>
<evidence type="ECO:0000303" key="9">
    <source>
    </source>
</evidence>
<evidence type="ECO:0000305" key="10"/>
<evidence type="ECO:0000312" key="11">
    <source>
        <dbReference type="EMBL" id="AAL08054.2"/>
    </source>
</evidence>
<evidence type="ECO:0000312" key="12">
    <source>
        <dbReference type="EMBL" id="AAU95464.1"/>
    </source>
</evidence>
<evidence type="ECO:0000312" key="13">
    <source>
        <dbReference type="EMBL" id="ACJ09042.1"/>
    </source>
</evidence>
<protein>
    <recommendedName>
        <fullName evidence="9">Ras-related protein Rab-7a</fullName>
        <ecNumber evidence="2">3.6.5.2</ecNumber>
    </recommendedName>
</protein>
<organism>
    <name type="scientific">Paramecium octaurelia</name>
    <dbReference type="NCBI Taxonomy" id="43137"/>
    <lineage>
        <taxon>Eukaryota</taxon>
        <taxon>Sar</taxon>
        <taxon>Alveolata</taxon>
        <taxon>Ciliophora</taxon>
        <taxon>Intramacronucleata</taxon>
        <taxon>Oligohymenophorea</taxon>
        <taxon>Peniculida</taxon>
        <taxon>Parameciidae</taxon>
        <taxon>Paramecium</taxon>
    </lineage>
</organism>
<gene>
    <name evidence="12" type="primary">Rab7a</name>
    <name evidence="11" type="synonym">Rab7</name>
</gene>
<dbReference type="EC" id="3.6.5.2" evidence="2"/>
<dbReference type="EMBL" id="AY050242">
    <property type="protein sequence ID" value="AAL08054.2"/>
    <property type="molecule type" value="Genomic_DNA"/>
</dbReference>
<dbReference type="EMBL" id="AY744503">
    <property type="protein sequence ID" value="AAU95464.1"/>
    <property type="molecule type" value="mRNA"/>
</dbReference>
<dbReference type="EMBL" id="FJ358492">
    <property type="protein sequence ID" value="ACJ09042.1"/>
    <property type="molecule type" value="Genomic_DNA"/>
</dbReference>
<dbReference type="SMR" id="Q95UJ0"/>
<dbReference type="iPTMnet" id="Q95UJ0"/>
<dbReference type="GO" id="GO:0000421">
    <property type="term" value="C:autophagosome membrane"/>
    <property type="evidence" value="ECO:0007669"/>
    <property type="project" value="UniProtKB-SubCell"/>
</dbReference>
<dbReference type="GO" id="GO:0005829">
    <property type="term" value="C:cytosol"/>
    <property type="evidence" value="ECO:0000250"/>
    <property type="project" value="GO_Central"/>
</dbReference>
<dbReference type="GO" id="GO:0031902">
    <property type="term" value="C:late endosome membrane"/>
    <property type="evidence" value="ECO:0000250"/>
    <property type="project" value="GO_Central"/>
</dbReference>
<dbReference type="GO" id="GO:0005811">
    <property type="term" value="C:lipid droplet"/>
    <property type="evidence" value="ECO:0000250"/>
    <property type="project" value="GO_Central"/>
</dbReference>
<dbReference type="GO" id="GO:0005765">
    <property type="term" value="C:lysosomal membrane"/>
    <property type="evidence" value="ECO:0007669"/>
    <property type="project" value="UniProtKB-SubCell"/>
</dbReference>
<dbReference type="GO" id="GO:0045335">
    <property type="term" value="C:phagocytic vesicle"/>
    <property type="evidence" value="ECO:0000314"/>
    <property type="project" value="UniProtKB"/>
</dbReference>
<dbReference type="GO" id="GO:0030670">
    <property type="term" value="C:phagocytic vesicle membrane"/>
    <property type="evidence" value="ECO:0000314"/>
    <property type="project" value="UniProtKB"/>
</dbReference>
<dbReference type="GO" id="GO:0003925">
    <property type="term" value="F:G protein activity"/>
    <property type="evidence" value="ECO:0007669"/>
    <property type="project" value="UniProtKB-EC"/>
</dbReference>
<dbReference type="GO" id="GO:0005525">
    <property type="term" value="F:GTP binding"/>
    <property type="evidence" value="ECO:0007669"/>
    <property type="project" value="UniProtKB-KW"/>
</dbReference>
<dbReference type="GO" id="GO:0099638">
    <property type="term" value="P:endosome to plasma membrane protein transport"/>
    <property type="evidence" value="ECO:0000250"/>
    <property type="project" value="UniProtKB"/>
</dbReference>
<dbReference type="GO" id="GO:0016042">
    <property type="term" value="P:lipid catabolic process"/>
    <property type="evidence" value="ECO:0007669"/>
    <property type="project" value="UniProtKB-KW"/>
</dbReference>
<dbReference type="GO" id="GO:0061724">
    <property type="term" value="P:lipophagy"/>
    <property type="evidence" value="ECO:0000250"/>
    <property type="project" value="GO_Central"/>
</dbReference>
<dbReference type="GO" id="GO:0090383">
    <property type="term" value="P:phagosome acidification"/>
    <property type="evidence" value="ECO:0000315"/>
    <property type="project" value="UniProtKB"/>
</dbReference>
<dbReference type="GO" id="GO:0090382">
    <property type="term" value="P:phagosome maturation"/>
    <property type="evidence" value="ECO:0000315"/>
    <property type="project" value="UniProtKB"/>
</dbReference>
<dbReference type="CDD" id="cd01862">
    <property type="entry name" value="Rab7"/>
    <property type="match status" value="1"/>
</dbReference>
<dbReference type="FunFam" id="3.40.50.300:FF:000086">
    <property type="entry name" value="Ras-related small GTPase"/>
    <property type="match status" value="1"/>
</dbReference>
<dbReference type="Gene3D" id="3.40.50.300">
    <property type="entry name" value="P-loop containing nucleotide triphosphate hydrolases"/>
    <property type="match status" value="1"/>
</dbReference>
<dbReference type="InterPro" id="IPR027417">
    <property type="entry name" value="P-loop_NTPase"/>
</dbReference>
<dbReference type="InterPro" id="IPR005225">
    <property type="entry name" value="Small_GTP-bd"/>
</dbReference>
<dbReference type="InterPro" id="IPR001806">
    <property type="entry name" value="Small_GTPase"/>
</dbReference>
<dbReference type="NCBIfam" id="TIGR00231">
    <property type="entry name" value="small_GTP"/>
    <property type="match status" value="1"/>
</dbReference>
<dbReference type="PANTHER" id="PTHR47981">
    <property type="entry name" value="RAB FAMILY"/>
    <property type="match status" value="1"/>
</dbReference>
<dbReference type="PANTHER" id="PTHR47981:SF20">
    <property type="entry name" value="RAS-RELATED PROTEIN RAB-7A"/>
    <property type="match status" value="1"/>
</dbReference>
<dbReference type="Pfam" id="PF00071">
    <property type="entry name" value="Ras"/>
    <property type="match status" value="1"/>
</dbReference>
<dbReference type="PRINTS" id="PR00449">
    <property type="entry name" value="RASTRNSFRMNG"/>
</dbReference>
<dbReference type="SMART" id="SM00175">
    <property type="entry name" value="RAB"/>
    <property type="match status" value="1"/>
</dbReference>
<dbReference type="SMART" id="SM00176">
    <property type="entry name" value="RAN"/>
    <property type="match status" value="1"/>
</dbReference>
<dbReference type="SMART" id="SM00173">
    <property type="entry name" value="RAS"/>
    <property type="match status" value="1"/>
</dbReference>
<dbReference type="SMART" id="SM00174">
    <property type="entry name" value="RHO"/>
    <property type="match status" value="1"/>
</dbReference>
<dbReference type="SUPFAM" id="SSF52540">
    <property type="entry name" value="P-loop containing nucleoside triphosphate hydrolases"/>
    <property type="match status" value="1"/>
</dbReference>
<dbReference type="PROSITE" id="PS51419">
    <property type="entry name" value="RAB"/>
    <property type="match status" value="1"/>
</dbReference>
<accession>Q95UJ0</accession>